<evidence type="ECO:0000255" key="1">
    <source>
        <dbReference type="HAMAP-Rule" id="MF_01111"/>
    </source>
</evidence>
<evidence type="ECO:0000305" key="2"/>
<keyword id="KW-0067">ATP-binding</keyword>
<keyword id="KW-0547">Nucleotide-binding</keyword>
<keyword id="KW-1185">Reference proteome</keyword>
<organism>
    <name type="scientific">Sulfurisphaera tokodaii (strain DSM 16993 / JCM 10545 / NBRC 100140 / 7)</name>
    <name type="common">Sulfolobus tokodaii</name>
    <dbReference type="NCBI Taxonomy" id="273063"/>
    <lineage>
        <taxon>Archaea</taxon>
        <taxon>Thermoproteota</taxon>
        <taxon>Thermoprotei</taxon>
        <taxon>Sulfolobales</taxon>
        <taxon>Sulfolobaceae</taxon>
        <taxon>Sulfurisphaera</taxon>
    </lineage>
</organism>
<reference key="1">
    <citation type="journal article" date="2001" name="DNA Res.">
        <title>Complete genome sequence of an aerobic thermoacidophilic Crenarchaeon, Sulfolobus tokodaii strain7.</title>
        <authorList>
            <person name="Kawarabayasi Y."/>
            <person name="Hino Y."/>
            <person name="Horikawa H."/>
            <person name="Jin-no K."/>
            <person name="Takahashi M."/>
            <person name="Sekine M."/>
            <person name="Baba S."/>
            <person name="Ankai A."/>
            <person name="Kosugi H."/>
            <person name="Hosoyama A."/>
            <person name="Fukui S."/>
            <person name="Nagai Y."/>
            <person name="Nishijima K."/>
            <person name="Otsuka R."/>
            <person name="Nakazawa H."/>
            <person name="Takamiya M."/>
            <person name="Kato Y."/>
            <person name="Yoshizawa T."/>
            <person name="Tanaka T."/>
            <person name="Kudoh Y."/>
            <person name="Yamazaki J."/>
            <person name="Kushida N."/>
            <person name="Oguchi A."/>
            <person name="Aoki K."/>
            <person name="Masuda S."/>
            <person name="Yanagii M."/>
            <person name="Nishimura M."/>
            <person name="Yamagishi A."/>
            <person name="Oshima T."/>
            <person name="Kikuchi H."/>
        </authorList>
    </citation>
    <scope>NUCLEOTIDE SEQUENCE [LARGE SCALE GENOMIC DNA]</scope>
    <source>
        <strain>DSM 16993 / JCM 10545 / NBRC 100140 / 7</strain>
    </source>
</reference>
<protein>
    <recommendedName>
        <fullName evidence="1">UPF0200 protein STK_09500</fullName>
    </recommendedName>
</protein>
<feature type="chain" id="PRO_0000094535" description="UPF0200 protein STK_09500">
    <location>
        <begin position="1"/>
        <end position="177"/>
    </location>
</feature>
<feature type="binding site" evidence="1">
    <location>
        <begin position="11"/>
        <end position="18"/>
    </location>
    <ligand>
        <name>ATP</name>
        <dbReference type="ChEBI" id="CHEBI:30616"/>
    </ligand>
</feature>
<proteinExistence type="inferred from homology"/>
<dbReference type="EMBL" id="BA000023">
    <property type="protein sequence ID" value="BAB65964.1"/>
    <property type="status" value="ALT_INIT"/>
    <property type="molecule type" value="Genomic_DNA"/>
</dbReference>
<dbReference type="SMR" id="Q973E9"/>
<dbReference type="STRING" id="273063.STK_09500"/>
<dbReference type="KEGG" id="sto:STK_09500"/>
<dbReference type="PATRIC" id="fig|273063.9.peg.1062"/>
<dbReference type="eggNOG" id="arCOG01045">
    <property type="taxonomic scope" value="Archaea"/>
</dbReference>
<dbReference type="Proteomes" id="UP000001015">
    <property type="component" value="Chromosome"/>
</dbReference>
<dbReference type="GO" id="GO:0005524">
    <property type="term" value="F:ATP binding"/>
    <property type="evidence" value="ECO:0007669"/>
    <property type="project" value="UniProtKB-UniRule"/>
</dbReference>
<dbReference type="Gene3D" id="3.40.50.300">
    <property type="entry name" value="P-loop containing nucleotide triphosphate hydrolases"/>
    <property type="match status" value="1"/>
</dbReference>
<dbReference type="HAMAP" id="MF_01111">
    <property type="entry name" value="UPF0200"/>
    <property type="match status" value="1"/>
</dbReference>
<dbReference type="InterPro" id="IPR022970">
    <property type="entry name" value="NTP_hydrolase-rel"/>
</dbReference>
<dbReference type="InterPro" id="IPR027417">
    <property type="entry name" value="P-loop_NTPase"/>
</dbReference>
<dbReference type="PANTHER" id="PTHR41930:SF1">
    <property type="entry name" value="DEPHOSPHO-COA KINASE"/>
    <property type="match status" value="1"/>
</dbReference>
<dbReference type="PANTHER" id="PTHR41930">
    <property type="entry name" value="UPF0200 PROTEIN MJ1399"/>
    <property type="match status" value="1"/>
</dbReference>
<dbReference type="Pfam" id="PF13238">
    <property type="entry name" value="AAA_18"/>
    <property type="match status" value="1"/>
</dbReference>
<dbReference type="SUPFAM" id="SSF52540">
    <property type="entry name" value="P-loop containing nucleoside triphosphate hydrolases"/>
    <property type="match status" value="1"/>
</dbReference>
<accession>Q973E9</accession>
<sequence>MSLIKIIAITGMPGSGKGELAKLLREKGIKVITMSDVLREKYYKEAKEGERLMDFAKRIRELYGKGAVAKLCIEKIGKEEIVAFDGVRNWEEIEEFKKIGNVTIIAVHSPPKLRYERLLKRGRKDDTLTVEGLMKRDWEELEMGIGNVIALADYILINDSTIEEFKSKAEELLKRIL</sequence>
<name>Y950_SULTO</name>
<gene>
    <name type="ordered locus">STK_09500</name>
</gene>
<comment type="similarity">
    <text evidence="1">Belongs to the UPF0200 family.</text>
</comment>
<comment type="sequence caution" evidence="2">
    <conflict type="erroneous initiation">
        <sequence resource="EMBL-CDS" id="BAB65964"/>
    </conflict>
</comment>